<name>TYSY_SHEB9</name>
<feature type="chain" id="PRO_1000073883" description="Thymidylate synthase">
    <location>
        <begin position="1"/>
        <end position="264"/>
    </location>
</feature>
<feature type="active site" description="Nucleophile" evidence="1">
    <location>
        <position position="146"/>
    </location>
</feature>
<feature type="binding site" description="in other chain" evidence="1">
    <location>
        <position position="21"/>
    </location>
    <ligand>
        <name>dUMP</name>
        <dbReference type="ChEBI" id="CHEBI:246422"/>
        <note>ligand shared between dimeric partners</note>
    </ligand>
</feature>
<feature type="binding site" evidence="1">
    <location>
        <position position="51"/>
    </location>
    <ligand>
        <name>(6R)-5,10-methylene-5,6,7,8-tetrahydrofolate</name>
        <dbReference type="ChEBI" id="CHEBI:15636"/>
    </ligand>
</feature>
<feature type="binding site" evidence="1">
    <location>
        <begin position="126"/>
        <end position="127"/>
    </location>
    <ligand>
        <name>dUMP</name>
        <dbReference type="ChEBI" id="CHEBI:246422"/>
        <note>ligand shared between dimeric partners</note>
    </ligand>
</feature>
<feature type="binding site" description="in other chain" evidence="1">
    <location>
        <begin position="166"/>
        <end position="169"/>
    </location>
    <ligand>
        <name>dUMP</name>
        <dbReference type="ChEBI" id="CHEBI:246422"/>
        <note>ligand shared between dimeric partners</note>
    </ligand>
</feature>
<feature type="binding site" evidence="1">
    <location>
        <position position="169"/>
    </location>
    <ligand>
        <name>(6R)-5,10-methylene-5,6,7,8-tetrahydrofolate</name>
        <dbReference type="ChEBI" id="CHEBI:15636"/>
    </ligand>
</feature>
<feature type="binding site" description="in other chain" evidence="1">
    <location>
        <position position="177"/>
    </location>
    <ligand>
        <name>dUMP</name>
        <dbReference type="ChEBI" id="CHEBI:246422"/>
        <note>ligand shared between dimeric partners</note>
    </ligand>
</feature>
<feature type="binding site" description="in other chain" evidence="1">
    <location>
        <begin position="207"/>
        <end position="209"/>
    </location>
    <ligand>
        <name>dUMP</name>
        <dbReference type="ChEBI" id="CHEBI:246422"/>
        <note>ligand shared between dimeric partners</note>
    </ligand>
</feature>
<feature type="binding site" evidence="1">
    <location>
        <position position="263"/>
    </location>
    <ligand>
        <name>(6R)-5,10-methylene-5,6,7,8-tetrahydrofolate</name>
        <dbReference type="ChEBI" id="CHEBI:15636"/>
    </ligand>
</feature>
<reference key="1">
    <citation type="submission" date="2007-11" db="EMBL/GenBank/DDBJ databases">
        <title>Complete sequence of chromosome of Shewanella baltica OS195.</title>
        <authorList>
            <consortium name="US DOE Joint Genome Institute"/>
            <person name="Copeland A."/>
            <person name="Lucas S."/>
            <person name="Lapidus A."/>
            <person name="Barry K."/>
            <person name="Glavina del Rio T."/>
            <person name="Dalin E."/>
            <person name="Tice H."/>
            <person name="Pitluck S."/>
            <person name="Chain P."/>
            <person name="Malfatti S."/>
            <person name="Shin M."/>
            <person name="Vergez L."/>
            <person name="Schmutz J."/>
            <person name="Larimer F."/>
            <person name="Land M."/>
            <person name="Hauser L."/>
            <person name="Kyrpides N."/>
            <person name="Kim E."/>
            <person name="Brettar I."/>
            <person name="Rodrigues J."/>
            <person name="Konstantinidis K."/>
            <person name="Klappenbach J."/>
            <person name="Hofle M."/>
            <person name="Tiedje J."/>
            <person name="Richardson P."/>
        </authorList>
    </citation>
    <scope>NUCLEOTIDE SEQUENCE [LARGE SCALE GENOMIC DNA]</scope>
    <source>
        <strain>OS195</strain>
    </source>
</reference>
<comment type="function">
    <text evidence="1">Catalyzes the reductive methylation of 2'-deoxyuridine-5'-monophosphate (dUMP) to 2'-deoxythymidine-5'-monophosphate (dTMP) while utilizing 5,10-methylenetetrahydrofolate (mTHF) as the methyl donor and reductant in the reaction, yielding dihydrofolate (DHF) as a by-product. This enzymatic reaction provides an intracellular de novo source of dTMP, an essential precursor for DNA biosynthesis.</text>
</comment>
<comment type="catalytic activity">
    <reaction evidence="1">
        <text>dUMP + (6R)-5,10-methylene-5,6,7,8-tetrahydrofolate = 7,8-dihydrofolate + dTMP</text>
        <dbReference type="Rhea" id="RHEA:12104"/>
        <dbReference type="ChEBI" id="CHEBI:15636"/>
        <dbReference type="ChEBI" id="CHEBI:57451"/>
        <dbReference type="ChEBI" id="CHEBI:63528"/>
        <dbReference type="ChEBI" id="CHEBI:246422"/>
        <dbReference type="EC" id="2.1.1.45"/>
    </reaction>
</comment>
<comment type="pathway">
    <text evidence="1">Pyrimidine metabolism; dTTP biosynthesis.</text>
</comment>
<comment type="subunit">
    <text evidence="1">Homodimer.</text>
</comment>
<comment type="subcellular location">
    <subcellularLocation>
        <location evidence="1">Cytoplasm</location>
    </subcellularLocation>
</comment>
<comment type="similarity">
    <text evidence="1">Belongs to the thymidylate synthase family. Bacterial-type ThyA subfamily.</text>
</comment>
<proteinExistence type="inferred from homology"/>
<sequence length="264" mass="30066">MKQYLDLMKHILAEGVDKSDRTGTGTRSVFGYQMRFDLSKGFPLVSTKKCHMRSIIHELLWFLKGETNVAYLRENKVSIWDEWADDNGDLGPVYGAQWRSWPTQSGDAIDQISQVIAQIKSQPDSRRLIVSAWNVGELDKMALAPCHAFFQFYVADGKLSCQLYQRSCDVFLGLPFNIASYALLTMMVAQQCDLALGDFVWTGGDTHLYSNHMEQTALQLSREPMPLPTMTILRRPESIFDYQFDDFELTNYAPHPHIKAPVAV</sequence>
<organism>
    <name type="scientific">Shewanella baltica (strain OS195)</name>
    <dbReference type="NCBI Taxonomy" id="399599"/>
    <lineage>
        <taxon>Bacteria</taxon>
        <taxon>Pseudomonadati</taxon>
        <taxon>Pseudomonadota</taxon>
        <taxon>Gammaproteobacteria</taxon>
        <taxon>Alteromonadales</taxon>
        <taxon>Shewanellaceae</taxon>
        <taxon>Shewanella</taxon>
    </lineage>
</organism>
<keyword id="KW-0963">Cytoplasm</keyword>
<keyword id="KW-0489">Methyltransferase</keyword>
<keyword id="KW-0545">Nucleotide biosynthesis</keyword>
<keyword id="KW-0808">Transferase</keyword>
<accession>A9L5M3</accession>
<protein>
    <recommendedName>
        <fullName evidence="1">Thymidylate synthase</fullName>
        <shortName evidence="1">TS</shortName>
        <shortName evidence="1">TSase</shortName>
        <ecNumber evidence="1">2.1.1.45</ecNumber>
    </recommendedName>
</protein>
<dbReference type="EC" id="2.1.1.45" evidence="1"/>
<dbReference type="EMBL" id="CP000891">
    <property type="protein sequence ID" value="ABX48440.1"/>
    <property type="molecule type" value="Genomic_DNA"/>
</dbReference>
<dbReference type="RefSeq" id="WP_006085062.1">
    <property type="nucleotide sequence ID" value="NC_009997.1"/>
</dbReference>
<dbReference type="SMR" id="A9L5M3"/>
<dbReference type="GeneID" id="11771535"/>
<dbReference type="KEGG" id="sbn:Sbal195_1265"/>
<dbReference type="HOGENOM" id="CLU_021669_0_0_6"/>
<dbReference type="UniPathway" id="UPA00575"/>
<dbReference type="Proteomes" id="UP000000770">
    <property type="component" value="Chromosome"/>
</dbReference>
<dbReference type="GO" id="GO:0005829">
    <property type="term" value="C:cytosol"/>
    <property type="evidence" value="ECO:0007669"/>
    <property type="project" value="TreeGrafter"/>
</dbReference>
<dbReference type="GO" id="GO:0004799">
    <property type="term" value="F:thymidylate synthase activity"/>
    <property type="evidence" value="ECO:0007669"/>
    <property type="project" value="UniProtKB-UniRule"/>
</dbReference>
<dbReference type="GO" id="GO:0006231">
    <property type="term" value="P:dTMP biosynthetic process"/>
    <property type="evidence" value="ECO:0007669"/>
    <property type="project" value="UniProtKB-UniRule"/>
</dbReference>
<dbReference type="GO" id="GO:0006235">
    <property type="term" value="P:dTTP biosynthetic process"/>
    <property type="evidence" value="ECO:0007669"/>
    <property type="project" value="UniProtKB-UniRule"/>
</dbReference>
<dbReference type="GO" id="GO:0032259">
    <property type="term" value="P:methylation"/>
    <property type="evidence" value="ECO:0007669"/>
    <property type="project" value="UniProtKB-KW"/>
</dbReference>
<dbReference type="CDD" id="cd00351">
    <property type="entry name" value="TS_Pyrimidine_HMase"/>
    <property type="match status" value="1"/>
</dbReference>
<dbReference type="FunFam" id="3.30.572.10:FF:000001">
    <property type="entry name" value="Thymidylate synthase"/>
    <property type="match status" value="1"/>
</dbReference>
<dbReference type="Gene3D" id="3.30.572.10">
    <property type="entry name" value="Thymidylate synthase/dCMP hydroxymethylase domain"/>
    <property type="match status" value="1"/>
</dbReference>
<dbReference type="HAMAP" id="MF_00008">
    <property type="entry name" value="Thymidy_synth_bact"/>
    <property type="match status" value="1"/>
</dbReference>
<dbReference type="InterPro" id="IPR045097">
    <property type="entry name" value="Thymidate_synth/dCMP_Mease"/>
</dbReference>
<dbReference type="InterPro" id="IPR023451">
    <property type="entry name" value="Thymidate_synth/dCMP_Mease_dom"/>
</dbReference>
<dbReference type="InterPro" id="IPR036926">
    <property type="entry name" value="Thymidate_synth/dCMP_Mease_sf"/>
</dbReference>
<dbReference type="InterPro" id="IPR000398">
    <property type="entry name" value="Thymidylate_synthase"/>
</dbReference>
<dbReference type="InterPro" id="IPR020940">
    <property type="entry name" value="Thymidylate_synthase_AS"/>
</dbReference>
<dbReference type="NCBIfam" id="NF002497">
    <property type="entry name" value="PRK01827.1-3"/>
    <property type="match status" value="1"/>
</dbReference>
<dbReference type="NCBIfam" id="NF002499">
    <property type="entry name" value="PRK01827.1-5"/>
    <property type="match status" value="1"/>
</dbReference>
<dbReference type="NCBIfam" id="TIGR03284">
    <property type="entry name" value="thym_sym"/>
    <property type="match status" value="2"/>
</dbReference>
<dbReference type="PANTHER" id="PTHR11548:SF9">
    <property type="entry name" value="THYMIDYLATE SYNTHASE"/>
    <property type="match status" value="1"/>
</dbReference>
<dbReference type="PANTHER" id="PTHR11548">
    <property type="entry name" value="THYMIDYLATE SYNTHASE 1"/>
    <property type="match status" value="1"/>
</dbReference>
<dbReference type="Pfam" id="PF00303">
    <property type="entry name" value="Thymidylat_synt"/>
    <property type="match status" value="1"/>
</dbReference>
<dbReference type="PRINTS" id="PR00108">
    <property type="entry name" value="THYMDSNTHASE"/>
</dbReference>
<dbReference type="SUPFAM" id="SSF55831">
    <property type="entry name" value="Thymidylate synthase/dCMP hydroxymethylase"/>
    <property type="match status" value="1"/>
</dbReference>
<dbReference type="PROSITE" id="PS00091">
    <property type="entry name" value="THYMIDYLATE_SYNTHASE"/>
    <property type="match status" value="1"/>
</dbReference>
<gene>
    <name evidence="1" type="primary">thyA</name>
    <name type="ordered locus">Sbal195_1265</name>
</gene>
<evidence type="ECO:0000255" key="1">
    <source>
        <dbReference type="HAMAP-Rule" id="MF_00008"/>
    </source>
</evidence>